<reference key="1">
    <citation type="journal article" date="2005" name="Genome Res.">
        <title>Comparative genome sequencing of Drosophila pseudoobscura: chromosomal, gene, and cis-element evolution.</title>
        <authorList>
            <person name="Richards S."/>
            <person name="Liu Y."/>
            <person name="Bettencourt B.R."/>
            <person name="Hradecky P."/>
            <person name="Letovsky S."/>
            <person name="Nielsen R."/>
            <person name="Thornton K."/>
            <person name="Hubisz M.J."/>
            <person name="Chen R."/>
            <person name="Meisel R.P."/>
            <person name="Couronne O."/>
            <person name="Hua S."/>
            <person name="Smith M.A."/>
            <person name="Zhang P."/>
            <person name="Liu J."/>
            <person name="Bussemaker H.J."/>
            <person name="van Batenburg M.F."/>
            <person name="Howells S.L."/>
            <person name="Scherer S.E."/>
            <person name="Sodergren E."/>
            <person name="Matthews B.B."/>
            <person name="Crosby M.A."/>
            <person name="Schroeder A.J."/>
            <person name="Ortiz-Barrientos D."/>
            <person name="Rives C.M."/>
            <person name="Metzker M.L."/>
            <person name="Muzny D.M."/>
            <person name="Scott G."/>
            <person name="Steffen D."/>
            <person name="Wheeler D.A."/>
            <person name="Worley K.C."/>
            <person name="Havlak P."/>
            <person name="Durbin K.J."/>
            <person name="Egan A."/>
            <person name="Gill R."/>
            <person name="Hume J."/>
            <person name="Morgan M.B."/>
            <person name="Miner G."/>
            <person name="Hamilton C."/>
            <person name="Huang Y."/>
            <person name="Waldron L."/>
            <person name="Verduzco D."/>
            <person name="Clerc-Blankenburg K.P."/>
            <person name="Dubchak I."/>
            <person name="Noor M.A.F."/>
            <person name="Anderson W."/>
            <person name="White K.P."/>
            <person name="Clark A.G."/>
            <person name="Schaeffer S.W."/>
            <person name="Gelbart W.M."/>
            <person name="Weinstock G.M."/>
            <person name="Gibbs R.A."/>
        </authorList>
    </citation>
    <scope>NUCLEOTIDE SEQUENCE [LARGE SCALE GENOMIC DNA]</scope>
    <source>
        <strain>MV2-25 / Tucson 14011-0121.94</strain>
    </source>
</reference>
<sequence>MADPKFQNLPGIAYDQPDVYETPDDPETDTSDYYEEEPENEAIERMHISASAAHKRFSGATLEGSVDFTDRIGRRPGRGYDMRGAGEYELVGQGEKETPVQKCQRLQIEMNELLNEVAALQVDRKIADEEKQSYDAVATVISTAKKVLDTLKLEQVLGKEQVPNSKQVKALISQVEEFKQSGVLTAIPTPGTDLASTARVASLEQRLYQLEKTVGAQPEKLSRLNAATNTTNVLEAVRQLSTKAALLQPDKLDTIEQRLTTLAGKMDSIAEKSSGSSQDAKRDQKISELYDIAKRTEPVVEILPHVIERMQALESLHKYANNFAKIIAEIEHKQGTITTSLVNNKELLHSVQETFAQNLETITNKVAKVEQRVTAISTAK</sequence>
<name>DCTN2_DROPS</name>
<accession>Q28Y46</accession>
<feature type="chain" id="PRO_0000288773" description="Dynactin subunit 2">
    <location>
        <begin position="1"/>
        <end position="380"/>
    </location>
</feature>
<feature type="region of interest" description="Disordered" evidence="4">
    <location>
        <begin position="1"/>
        <end position="40"/>
    </location>
</feature>
<feature type="coiled-coil region" evidence="3">
    <location>
        <begin position="100"/>
        <end position="135"/>
    </location>
</feature>
<feature type="coiled-coil region" evidence="3">
    <location>
        <begin position="353"/>
        <end position="377"/>
    </location>
</feature>
<feature type="compositionally biased region" description="Acidic residues" evidence="4">
    <location>
        <begin position="21"/>
        <end position="40"/>
    </location>
</feature>
<evidence type="ECO:0000250" key="1"/>
<evidence type="ECO:0000250" key="2">
    <source>
        <dbReference type="UniProtKB" id="Q7K2D2"/>
    </source>
</evidence>
<evidence type="ECO:0000255" key="3"/>
<evidence type="ECO:0000256" key="4">
    <source>
        <dbReference type="SAM" id="MobiDB-lite"/>
    </source>
</evidence>
<evidence type="ECO:0000305" key="5"/>
<comment type="function">
    <text evidence="1">Modulates cytoplasmic dynein binding to an organelle, and plays a role in prometaphase chromosome alignment and spindle organization during mitosis. May play a role in synapse formation during brain development (By similarity).</text>
</comment>
<comment type="subunit">
    <text evidence="1">Subunit of dynactin, a multiprotein complex associated with dynein.</text>
</comment>
<comment type="subcellular location">
    <subcellularLocation>
        <location evidence="1">Cytoplasm</location>
        <location evidence="1">Cytoskeleton</location>
    </subcellularLocation>
    <subcellularLocation>
        <location evidence="1">Membrane</location>
        <topology evidence="1">Peripheral membrane protein</topology>
    </subcellularLocation>
</comment>
<comment type="similarity">
    <text evidence="5">Belongs to the dynactin subunit 2 family.</text>
</comment>
<keyword id="KW-0175">Coiled coil</keyword>
<keyword id="KW-0963">Cytoplasm</keyword>
<keyword id="KW-0206">Cytoskeleton</keyword>
<keyword id="KW-0243">Dynein</keyword>
<keyword id="KW-0472">Membrane</keyword>
<keyword id="KW-0493">Microtubule</keyword>
<keyword id="KW-1185">Reference proteome</keyword>
<proteinExistence type="inferred from homology"/>
<protein>
    <recommendedName>
        <fullName>Dynactin subunit 2</fullName>
    </recommendedName>
    <alternativeName>
        <fullName evidence="2">Dynactin 2 p50 subunit</fullName>
    </alternativeName>
</protein>
<dbReference type="EMBL" id="CM000071">
    <property type="protein sequence ID" value="EAL26119.1"/>
    <property type="molecule type" value="Genomic_DNA"/>
</dbReference>
<dbReference type="RefSeq" id="XP_001361541.1">
    <property type="nucleotide sequence ID" value="XM_001361504.3"/>
</dbReference>
<dbReference type="SMR" id="Q28Y46"/>
<dbReference type="FunCoup" id="Q28Y46">
    <property type="interactions" value="1434"/>
</dbReference>
<dbReference type="STRING" id="46245.Q28Y46"/>
<dbReference type="EnsemblMetazoa" id="FBtr0279956">
    <property type="protein sequence ID" value="FBpp0278394"/>
    <property type="gene ID" value="FBgn0080932"/>
</dbReference>
<dbReference type="GeneID" id="4805079"/>
<dbReference type="KEGG" id="dpo:4805079"/>
<dbReference type="CTD" id="44086"/>
<dbReference type="eggNOG" id="KOG3958">
    <property type="taxonomic scope" value="Eukaryota"/>
</dbReference>
<dbReference type="HOGENOM" id="CLU_049964_1_0_1"/>
<dbReference type="InParanoid" id="Q28Y46"/>
<dbReference type="OMA" id="YKFGDWE"/>
<dbReference type="PhylomeDB" id="Q28Y46"/>
<dbReference type="Proteomes" id="UP000001819">
    <property type="component" value="Chromosome 3"/>
</dbReference>
<dbReference type="Bgee" id="FBgn0080932">
    <property type="expression patterns" value="Expressed in female reproductive system and 2 other cell types or tissues"/>
</dbReference>
<dbReference type="GO" id="GO:0005737">
    <property type="term" value="C:cytoplasm"/>
    <property type="evidence" value="ECO:0007669"/>
    <property type="project" value="UniProtKB-KW"/>
</dbReference>
<dbReference type="GO" id="GO:0005869">
    <property type="term" value="C:dynactin complex"/>
    <property type="evidence" value="ECO:0000250"/>
    <property type="project" value="UniProtKB"/>
</dbReference>
<dbReference type="GO" id="GO:0030286">
    <property type="term" value="C:dynein complex"/>
    <property type="evidence" value="ECO:0007669"/>
    <property type="project" value="UniProtKB-KW"/>
</dbReference>
<dbReference type="GO" id="GO:0016020">
    <property type="term" value="C:membrane"/>
    <property type="evidence" value="ECO:0007669"/>
    <property type="project" value="UniProtKB-SubCell"/>
</dbReference>
<dbReference type="GO" id="GO:0005874">
    <property type="term" value="C:microtubule"/>
    <property type="evidence" value="ECO:0007669"/>
    <property type="project" value="UniProtKB-KW"/>
</dbReference>
<dbReference type="GO" id="GO:0031982">
    <property type="term" value="C:vesicle"/>
    <property type="evidence" value="ECO:0000250"/>
    <property type="project" value="UniProtKB"/>
</dbReference>
<dbReference type="GO" id="GO:0007080">
    <property type="term" value="P:mitotic metaphase chromosome alignment"/>
    <property type="evidence" value="ECO:0000250"/>
    <property type="project" value="UniProtKB"/>
</dbReference>
<dbReference type="GO" id="GO:0007052">
    <property type="term" value="P:mitotic spindle organization"/>
    <property type="evidence" value="ECO:0000250"/>
    <property type="project" value="UniProtKB"/>
</dbReference>
<dbReference type="InterPro" id="IPR028133">
    <property type="entry name" value="Dynamitin"/>
</dbReference>
<dbReference type="PANTHER" id="PTHR15346">
    <property type="entry name" value="DYNACTIN SUBUNIT"/>
    <property type="match status" value="1"/>
</dbReference>
<dbReference type="Pfam" id="PF04912">
    <property type="entry name" value="Dynamitin"/>
    <property type="match status" value="1"/>
</dbReference>
<gene>
    <name evidence="2" type="primary">DCTN2-p50</name>
    <name evidence="2" type="synonym">Dmn</name>
    <name type="ORF">GA20943</name>
</gene>
<organism>
    <name type="scientific">Drosophila pseudoobscura pseudoobscura</name>
    <name type="common">Fruit fly</name>
    <dbReference type="NCBI Taxonomy" id="46245"/>
    <lineage>
        <taxon>Eukaryota</taxon>
        <taxon>Metazoa</taxon>
        <taxon>Ecdysozoa</taxon>
        <taxon>Arthropoda</taxon>
        <taxon>Hexapoda</taxon>
        <taxon>Insecta</taxon>
        <taxon>Pterygota</taxon>
        <taxon>Neoptera</taxon>
        <taxon>Endopterygota</taxon>
        <taxon>Diptera</taxon>
        <taxon>Brachycera</taxon>
        <taxon>Muscomorpha</taxon>
        <taxon>Ephydroidea</taxon>
        <taxon>Drosophilidae</taxon>
        <taxon>Drosophila</taxon>
        <taxon>Sophophora</taxon>
    </lineage>
</organism>